<reference key="1">
    <citation type="journal article" date="2003" name="Mol. Microbiol.">
        <title>Genome-based analysis of virulence genes in a non-biofilm-forming Staphylococcus epidermidis strain (ATCC 12228).</title>
        <authorList>
            <person name="Zhang Y.-Q."/>
            <person name="Ren S.-X."/>
            <person name="Li H.-L."/>
            <person name="Wang Y.-X."/>
            <person name="Fu G."/>
            <person name="Yang J."/>
            <person name="Qin Z.-Q."/>
            <person name="Miao Y.-G."/>
            <person name="Wang W.-Y."/>
            <person name="Chen R.-S."/>
            <person name="Shen Y."/>
            <person name="Chen Z."/>
            <person name="Yuan Z.-H."/>
            <person name="Zhao G.-P."/>
            <person name="Qu D."/>
            <person name="Danchin A."/>
            <person name="Wen Y.-M."/>
        </authorList>
    </citation>
    <scope>NUCLEOTIDE SEQUENCE [LARGE SCALE GENOMIC DNA]</scope>
    <source>
        <strain>ATCC 12228 / FDA PCI 1200</strain>
    </source>
</reference>
<organism>
    <name type="scientific">Staphylococcus epidermidis (strain ATCC 12228 / FDA PCI 1200)</name>
    <dbReference type="NCBI Taxonomy" id="176280"/>
    <lineage>
        <taxon>Bacteria</taxon>
        <taxon>Bacillati</taxon>
        <taxon>Bacillota</taxon>
        <taxon>Bacilli</taxon>
        <taxon>Bacillales</taxon>
        <taxon>Staphylococcaceae</taxon>
        <taxon>Staphylococcus</taxon>
    </lineage>
</organism>
<keyword id="KW-0028">Amino-acid biosynthesis</keyword>
<keyword id="KW-0067">ATP-binding</keyword>
<keyword id="KW-0963">Cytoplasm</keyword>
<keyword id="KW-0418">Kinase</keyword>
<keyword id="KW-0547">Nucleotide-binding</keyword>
<keyword id="KW-0791">Threonine biosynthesis</keyword>
<keyword id="KW-0808">Transferase</keyword>
<name>KHSE_STAES</name>
<proteinExistence type="inferred from homology"/>
<evidence type="ECO:0000255" key="1">
    <source>
        <dbReference type="HAMAP-Rule" id="MF_00384"/>
    </source>
</evidence>
<accession>Q8CSQ2</accession>
<gene>
    <name evidence="1" type="primary">thrB</name>
    <name type="ordered locus">SE_1011</name>
</gene>
<feature type="chain" id="PRO_0000156610" description="Homoserine kinase">
    <location>
        <begin position="1"/>
        <end position="306"/>
    </location>
</feature>
<feature type="binding site" evidence="1">
    <location>
        <begin position="90"/>
        <end position="100"/>
    </location>
    <ligand>
        <name>ATP</name>
        <dbReference type="ChEBI" id="CHEBI:30616"/>
    </ligand>
</feature>
<sequence>MEEVLKLKIPASTANLGVGFDSIGMALDKYLHMSIRKIERSNWEFLYYSSELEGLPKDENNYIYQTALNVAHKYNVTLPSLQIEMRSDIPLARGLGSSASALVGALFIANYFGNIQLSKYELLQLATEIEGHPDNVAPTIYGGLIAGFYNPITKITDVARIEVPHVDIILTIPPYELRTEDSRRVLPDTFSHKGAVQNSAISNTMICALIQHKYKLAGKMMEQDGFHEPYRQHLIPEFNQVRKLSRQHDAYATVISGAGPTILTLCPKEKSGKLVRTLREKINNCASELVTINEIGVKDEVVYLKS</sequence>
<comment type="function">
    <text evidence="1">Catalyzes the ATP-dependent phosphorylation of L-homoserine to L-homoserine phosphate.</text>
</comment>
<comment type="catalytic activity">
    <reaction evidence="1">
        <text>L-homoserine + ATP = O-phospho-L-homoserine + ADP + H(+)</text>
        <dbReference type="Rhea" id="RHEA:13985"/>
        <dbReference type="ChEBI" id="CHEBI:15378"/>
        <dbReference type="ChEBI" id="CHEBI:30616"/>
        <dbReference type="ChEBI" id="CHEBI:57476"/>
        <dbReference type="ChEBI" id="CHEBI:57590"/>
        <dbReference type="ChEBI" id="CHEBI:456216"/>
        <dbReference type="EC" id="2.7.1.39"/>
    </reaction>
</comment>
<comment type="pathway">
    <text evidence="1">Amino-acid biosynthesis; L-threonine biosynthesis; L-threonine from L-aspartate: step 4/5.</text>
</comment>
<comment type="subcellular location">
    <subcellularLocation>
        <location evidence="1">Cytoplasm</location>
    </subcellularLocation>
</comment>
<comment type="similarity">
    <text evidence="1">Belongs to the GHMP kinase family. Homoserine kinase subfamily.</text>
</comment>
<dbReference type="EC" id="2.7.1.39" evidence="1"/>
<dbReference type="EMBL" id="AE015929">
    <property type="protein sequence ID" value="AAO04608.1"/>
    <property type="molecule type" value="Genomic_DNA"/>
</dbReference>
<dbReference type="RefSeq" id="NP_764566.1">
    <property type="nucleotide sequence ID" value="NC_004461.1"/>
</dbReference>
<dbReference type="RefSeq" id="WP_001829500.1">
    <property type="nucleotide sequence ID" value="NZ_WBME01000038.1"/>
</dbReference>
<dbReference type="SMR" id="Q8CSQ2"/>
<dbReference type="KEGG" id="sep:SE_1011"/>
<dbReference type="PATRIC" id="fig|176280.10.peg.986"/>
<dbReference type="eggNOG" id="COG0083">
    <property type="taxonomic scope" value="Bacteria"/>
</dbReference>
<dbReference type="HOGENOM" id="CLU_041243_0_0_9"/>
<dbReference type="OrthoDB" id="9769912at2"/>
<dbReference type="UniPathway" id="UPA00050">
    <property type="reaction ID" value="UER00064"/>
</dbReference>
<dbReference type="Proteomes" id="UP000001411">
    <property type="component" value="Chromosome"/>
</dbReference>
<dbReference type="GO" id="GO:0005737">
    <property type="term" value="C:cytoplasm"/>
    <property type="evidence" value="ECO:0007669"/>
    <property type="project" value="UniProtKB-SubCell"/>
</dbReference>
<dbReference type="GO" id="GO:0005524">
    <property type="term" value="F:ATP binding"/>
    <property type="evidence" value="ECO:0007669"/>
    <property type="project" value="UniProtKB-UniRule"/>
</dbReference>
<dbReference type="GO" id="GO:0004413">
    <property type="term" value="F:homoserine kinase activity"/>
    <property type="evidence" value="ECO:0007669"/>
    <property type="project" value="UniProtKB-UniRule"/>
</dbReference>
<dbReference type="GO" id="GO:0009088">
    <property type="term" value="P:threonine biosynthetic process"/>
    <property type="evidence" value="ECO:0007669"/>
    <property type="project" value="UniProtKB-UniRule"/>
</dbReference>
<dbReference type="Gene3D" id="3.30.230.10">
    <property type="match status" value="1"/>
</dbReference>
<dbReference type="Gene3D" id="3.30.70.890">
    <property type="entry name" value="GHMP kinase, C-terminal domain"/>
    <property type="match status" value="1"/>
</dbReference>
<dbReference type="HAMAP" id="MF_00384">
    <property type="entry name" value="Homoser_kinase"/>
    <property type="match status" value="1"/>
</dbReference>
<dbReference type="InterPro" id="IPR013750">
    <property type="entry name" value="GHMP_kinase_C_dom"/>
</dbReference>
<dbReference type="InterPro" id="IPR036554">
    <property type="entry name" value="GHMP_kinase_C_sf"/>
</dbReference>
<dbReference type="InterPro" id="IPR006204">
    <property type="entry name" value="GHMP_kinase_N_dom"/>
</dbReference>
<dbReference type="InterPro" id="IPR006203">
    <property type="entry name" value="GHMP_knse_ATP-bd_CS"/>
</dbReference>
<dbReference type="InterPro" id="IPR000870">
    <property type="entry name" value="Homoserine_kinase"/>
</dbReference>
<dbReference type="InterPro" id="IPR020568">
    <property type="entry name" value="Ribosomal_Su5_D2-typ_SF"/>
</dbReference>
<dbReference type="InterPro" id="IPR014721">
    <property type="entry name" value="Ribsml_uS5_D2-typ_fold_subgr"/>
</dbReference>
<dbReference type="NCBIfam" id="TIGR00191">
    <property type="entry name" value="thrB"/>
    <property type="match status" value="1"/>
</dbReference>
<dbReference type="PANTHER" id="PTHR20861:SF1">
    <property type="entry name" value="HOMOSERINE KINASE"/>
    <property type="match status" value="1"/>
</dbReference>
<dbReference type="PANTHER" id="PTHR20861">
    <property type="entry name" value="HOMOSERINE/4-DIPHOSPHOCYTIDYL-2-C-METHYL-D-ERYTHRITOL KINASE"/>
    <property type="match status" value="1"/>
</dbReference>
<dbReference type="Pfam" id="PF08544">
    <property type="entry name" value="GHMP_kinases_C"/>
    <property type="match status" value="1"/>
</dbReference>
<dbReference type="Pfam" id="PF00288">
    <property type="entry name" value="GHMP_kinases_N"/>
    <property type="match status" value="1"/>
</dbReference>
<dbReference type="PIRSF" id="PIRSF000676">
    <property type="entry name" value="Homoser_kin"/>
    <property type="match status" value="1"/>
</dbReference>
<dbReference type="PRINTS" id="PR00958">
    <property type="entry name" value="HOMSERKINASE"/>
</dbReference>
<dbReference type="SUPFAM" id="SSF55060">
    <property type="entry name" value="GHMP Kinase, C-terminal domain"/>
    <property type="match status" value="1"/>
</dbReference>
<dbReference type="SUPFAM" id="SSF54211">
    <property type="entry name" value="Ribosomal protein S5 domain 2-like"/>
    <property type="match status" value="1"/>
</dbReference>
<dbReference type="PROSITE" id="PS00627">
    <property type="entry name" value="GHMP_KINASES_ATP"/>
    <property type="match status" value="1"/>
</dbReference>
<protein>
    <recommendedName>
        <fullName evidence="1">Homoserine kinase</fullName>
        <shortName evidence="1">HK</shortName>
        <shortName evidence="1">HSK</shortName>
        <ecNumber evidence="1">2.7.1.39</ecNumber>
    </recommendedName>
</protein>